<proteinExistence type="inferred from homology"/>
<reference key="1">
    <citation type="journal article" date="2004" name="Proc. Natl. Acad. Sci. U.S.A.">
        <title>Genome sequence of the enterobacterial phytopathogen Erwinia carotovora subsp. atroseptica and characterization of virulence factors.</title>
        <authorList>
            <person name="Bell K.S."/>
            <person name="Sebaihia M."/>
            <person name="Pritchard L."/>
            <person name="Holden M.T.G."/>
            <person name="Hyman L.J."/>
            <person name="Holeva M.C."/>
            <person name="Thomson N.R."/>
            <person name="Bentley S.D."/>
            <person name="Churcher L.J.C."/>
            <person name="Mungall K."/>
            <person name="Atkin R."/>
            <person name="Bason N."/>
            <person name="Brooks K."/>
            <person name="Chillingworth T."/>
            <person name="Clark K."/>
            <person name="Doggett J."/>
            <person name="Fraser A."/>
            <person name="Hance Z."/>
            <person name="Hauser H."/>
            <person name="Jagels K."/>
            <person name="Moule S."/>
            <person name="Norbertczak H."/>
            <person name="Ormond D."/>
            <person name="Price C."/>
            <person name="Quail M.A."/>
            <person name="Sanders M."/>
            <person name="Walker D."/>
            <person name="Whitehead S."/>
            <person name="Salmond G.P.C."/>
            <person name="Birch P.R.J."/>
            <person name="Parkhill J."/>
            <person name="Toth I.K."/>
        </authorList>
    </citation>
    <scope>NUCLEOTIDE SEQUENCE [LARGE SCALE GENOMIC DNA]</scope>
    <source>
        <strain>SCRI 1043 / ATCC BAA-672</strain>
    </source>
</reference>
<gene>
    <name evidence="2" type="primary">dgoD</name>
    <name type="ordered locus">ECA4416</name>
</gene>
<feature type="chain" id="PRO_0000352621" description="D-galactonate dehydratase">
    <location>
        <begin position="1"/>
        <end position="382"/>
    </location>
</feature>
<feature type="active site" description="Proton donor" evidence="1">
    <location>
        <position position="185"/>
    </location>
</feature>
<feature type="active site" description="Proton acceptor" evidence="1">
    <location>
        <position position="285"/>
    </location>
</feature>
<feature type="binding site" evidence="2">
    <location>
        <position position="183"/>
    </location>
    <ligand>
        <name>Mg(2+)</name>
        <dbReference type="ChEBI" id="CHEBI:18420"/>
    </ligand>
</feature>
<feature type="binding site" evidence="2">
    <location>
        <position position="209"/>
    </location>
    <ligand>
        <name>Mg(2+)</name>
        <dbReference type="ChEBI" id="CHEBI:18420"/>
    </ligand>
</feature>
<feature type="binding site" evidence="2">
    <location>
        <position position="235"/>
    </location>
    <ligand>
        <name>Mg(2+)</name>
        <dbReference type="ChEBI" id="CHEBI:18420"/>
    </ligand>
</feature>
<feature type="site" description="Increases basicity of active site His" evidence="2">
    <location>
        <position position="258"/>
    </location>
</feature>
<feature type="site" description="Transition state stabilizer" evidence="2">
    <location>
        <position position="310"/>
    </location>
</feature>
<accession>Q6CYT9</accession>
<name>DGOD_PECAS</name>
<evidence type="ECO:0000250" key="1"/>
<evidence type="ECO:0000255" key="2">
    <source>
        <dbReference type="HAMAP-Rule" id="MF_01289"/>
    </source>
</evidence>
<comment type="function">
    <text evidence="2">Catalyzes the dehydration of D-galactonate to 2-keto-3-deoxy-D-galactonate.</text>
</comment>
<comment type="catalytic activity">
    <reaction evidence="2">
        <text>D-galactonate = 2-dehydro-3-deoxy-D-galactonate + H2O</text>
        <dbReference type="Rhea" id="RHEA:18649"/>
        <dbReference type="ChEBI" id="CHEBI:12931"/>
        <dbReference type="ChEBI" id="CHEBI:15377"/>
        <dbReference type="ChEBI" id="CHEBI:57989"/>
        <dbReference type="EC" id="4.2.1.6"/>
    </reaction>
</comment>
<comment type="cofactor">
    <cofactor evidence="2">
        <name>Mg(2+)</name>
        <dbReference type="ChEBI" id="CHEBI:18420"/>
    </cofactor>
    <text evidence="2">Binds 1 Mg(2+) ion per subunit.</text>
</comment>
<comment type="pathway">
    <text evidence="2">Carbohydrate acid metabolism; D-galactonate degradation; D-glyceraldehyde 3-phosphate and pyruvate from D-galactonate: step 1/3.</text>
</comment>
<comment type="miscellaneous">
    <text evidence="2">Reaction proceeds via an anti dehydration.</text>
</comment>
<comment type="similarity">
    <text evidence="2">Belongs to the mandelate racemase/muconate lactonizing enzyme family. GalD subfamily.</text>
</comment>
<dbReference type="EC" id="4.2.1.6" evidence="2"/>
<dbReference type="EMBL" id="BX950851">
    <property type="protein sequence ID" value="CAG77312.1"/>
    <property type="molecule type" value="Genomic_DNA"/>
</dbReference>
<dbReference type="RefSeq" id="WP_005976723.1">
    <property type="nucleotide sequence ID" value="NC_004547.2"/>
</dbReference>
<dbReference type="SMR" id="Q6CYT9"/>
<dbReference type="STRING" id="218491.ECA4416"/>
<dbReference type="GeneID" id="90769183"/>
<dbReference type="KEGG" id="eca:ECA4416"/>
<dbReference type="eggNOG" id="COG4948">
    <property type="taxonomic scope" value="Bacteria"/>
</dbReference>
<dbReference type="HOGENOM" id="CLU_030273_3_2_6"/>
<dbReference type="OrthoDB" id="103536at2"/>
<dbReference type="UniPathway" id="UPA00081">
    <property type="reaction ID" value="UER00518"/>
</dbReference>
<dbReference type="Proteomes" id="UP000007966">
    <property type="component" value="Chromosome"/>
</dbReference>
<dbReference type="GO" id="GO:0008869">
    <property type="term" value="F:galactonate dehydratase activity"/>
    <property type="evidence" value="ECO:0007669"/>
    <property type="project" value="UniProtKB-UniRule"/>
</dbReference>
<dbReference type="GO" id="GO:0000287">
    <property type="term" value="F:magnesium ion binding"/>
    <property type="evidence" value="ECO:0007669"/>
    <property type="project" value="UniProtKB-UniRule"/>
</dbReference>
<dbReference type="GO" id="GO:0009063">
    <property type="term" value="P:amino acid catabolic process"/>
    <property type="evidence" value="ECO:0007669"/>
    <property type="project" value="InterPro"/>
</dbReference>
<dbReference type="GO" id="GO:0034194">
    <property type="term" value="P:D-galactonate catabolic process"/>
    <property type="evidence" value="ECO:0007669"/>
    <property type="project" value="UniProtKB-UniRule"/>
</dbReference>
<dbReference type="CDD" id="cd03325">
    <property type="entry name" value="D-galactonate_dehydratase"/>
    <property type="match status" value="1"/>
</dbReference>
<dbReference type="FunFam" id="3.30.390.10:FF:000003">
    <property type="entry name" value="D-galactonate dehydratase"/>
    <property type="match status" value="1"/>
</dbReference>
<dbReference type="Gene3D" id="3.20.20.120">
    <property type="entry name" value="Enolase-like C-terminal domain"/>
    <property type="match status" value="1"/>
</dbReference>
<dbReference type="Gene3D" id="3.30.390.10">
    <property type="entry name" value="Enolase-like, N-terminal domain"/>
    <property type="match status" value="1"/>
</dbReference>
<dbReference type="HAMAP" id="MF_01289">
    <property type="entry name" value="Galacton_dehydrat"/>
    <property type="match status" value="1"/>
</dbReference>
<dbReference type="InterPro" id="IPR034593">
    <property type="entry name" value="DgoD-like"/>
</dbReference>
<dbReference type="InterPro" id="IPR036849">
    <property type="entry name" value="Enolase-like_C_sf"/>
</dbReference>
<dbReference type="InterPro" id="IPR029017">
    <property type="entry name" value="Enolase-like_N"/>
</dbReference>
<dbReference type="InterPro" id="IPR029065">
    <property type="entry name" value="Enolase_C-like"/>
</dbReference>
<dbReference type="InterPro" id="IPR023592">
    <property type="entry name" value="Galactonate_deHydtase"/>
</dbReference>
<dbReference type="InterPro" id="IPR018110">
    <property type="entry name" value="Mandel_Rmase/mucon_lact_enz_CS"/>
</dbReference>
<dbReference type="InterPro" id="IPR013342">
    <property type="entry name" value="Mandelate_racemase_C"/>
</dbReference>
<dbReference type="InterPro" id="IPR013341">
    <property type="entry name" value="Mandelate_racemase_N_dom"/>
</dbReference>
<dbReference type="NCBIfam" id="NF010624">
    <property type="entry name" value="PRK14017.1"/>
    <property type="match status" value="1"/>
</dbReference>
<dbReference type="PANTHER" id="PTHR48080:SF2">
    <property type="entry name" value="D-GALACTONATE DEHYDRATASE"/>
    <property type="match status" value="1"/>
</dbReference>
<dbReference type="PANTHER" id="PTHR48080">
    <property type="entry name" value="D-GALACTONATE DEHYDRATASE-RELATED"/>
    <property type="match status" value="1"/>
</dbReference>
<dbReference type="Pfam" id="PF13378">
    <property type="entry name" value="MR_MLE_C"/>
    <property type="match status" value="1"/>
</dbReference>
<dbReference type="Pfam" id="PF02746">
    <property type="entry name" value="MR_MLE_N"/>
    <property type="match status" value="1"/>
</dbReference>
<dbReference type="SFLD" id="SFLDF00003">
    <property type="entry name" value="D-galactonate_dehydratase"/>
    <property type="match status" value="1"/>
</dbReference>
<dbReference type="SFLD" id="SFLDS00001">
    <property type="entry name" value="Enolase"/>
    <property type="match status" value="1"/>
</dbReference>
<dbReference type="SMART" id="SM00922">
    <property type="entry name" value="MR_MLE"/>
    <property type="match status" value="1"/>
</dbReference>
<dbReference type="SUPFAM" id="SSF51604">
    <property type="entry name" value="Enolase C-terminal domain-like"/>
    <property type="match status" value="1"/>
</dbReference>
<dbReference type="SUPFAM" id="SSF54826">
    <property type="entry name" value="Enolase N-terminal domain-like"/>
    <property type="match status" value="1"/>
</dbReference>
<dbReference type="PROSITE" id="PS00908">
    <property type="entry name" value="MR_MLE_1"/>
    <property type="match status" value="1"/>
</dbReference>
<dbReference type="PROSITE" id="PS00909">
    <property type="entry name" value="MR_MLE_2"/>
    <property type="match status" value="1"/>
</dbReference>
<sequence length="382" mass="42425">MKITKITTYRLPPRWMFLKIETDEGIVGWGEPVIEGRARTVEAAVHELSDYLIGQDPARINDIWQVLYRAGFYRGGPILMSAIAGIDQALWDIKGKALGVPVYQLLGGLVRDKIKAYSWVGGDRPSEVIAGIKKLTEIGFDTFKLNGCEEMGIIDNSRKVDAAVAVVAEIREAFGNSIEFGLDFHGRVDAPMAKILIKELEPYRPLFIEEPVLAEQAEYYPRLAAQTHLPIAAGERMFSRFDFKRVLADGGLAIIQPDLSHAGGITECFKIAAMAEAYDVALAPHCPLGPIALASCLHLDFVARNAVLQEQSMGIHYNKGAELLDYVINKEDFAMTDGHFYPLNKPGLGVEINEELVIERSKNAPDWRNPVWRYPDGAVAEW</sequence>
<protein>
    <recommendedName>
        <fullName evidence="2">D-galactonate dehydratase</fullName>
        <shortName evidence="2">GalD</shortName>
        <ecNumber evidence="2">4.2.1.6</ecNumber>
    </recommendedName>
</protein>
<organism>
    <name type="scientific">Pectobacterium atrosepticum (strain SCRI 1043 / ATCC BAA-672)</name>
    <name type="common">Erwinia carotovora subsp. atroseptica</name>
    <dbReference type="NCBI Taxonomy" id="218491"/>
    <lineage>
        <taxon>Bacteria</taxon>
        <taxon>Pseudomonadati</taxon>
        <taxon>Pseudomonadota</taxon>
        <taxon>Gammaproteobacteria</taxon>
        <taxon>Enterobacterales</taxon>
        <taxon>Pectobacteriaceae</taxon>
        <taxon>Pectobacterium</taxon>
    </lineage>
</organism>
<keyword id="KW-0456">Lyase</keyword>
<keyword id="KW-0460">Magnesium</keyword>
<keyword id="KW-0479">Metal-binding</keyword>
<keyword id="KW-1185">Reference proteome</keyword>